<organism>
    <name type="scientific">Arabidopsis thaliana</name>
    <name type="common">Mouse-ear cress</name>
    <dbReference type="NCBI Taxonomy" id="3702"/>
    <lineage>
        <taxon>Eukaryota</taxon>
        <taxon>Viridiplantae</taxon>
        <taxon>Streptophyta</taxon>
        <taxon>Embryophyta</taxon>
        <taxon>Tracheophyta</taxon>
        <taxon>Spermatophyta</taxon>
        <taxon>Magnoliopsida</taxon>
        <taxon>eudicotyledons</taxon>
        <taxon>Gunneridae</taxon>
        <taxon>Pentapetalae</taxon>
        <taxon>rosids</taxon>
        <taxon>malvids</taxon>
        <taxon>Brassicales</taxon>
        <taxon>Brassicaceae</taxon>
        <taxon>Camelineae</taxon>
        <taxon>Arabidopsis</taxon>
    </lineage>
</organism>
<name>MUC21_ARATH</name>
<evidence type="ECO:0000255" key="1"/>
<evidence type="ECO:0000255" key="2">
    <source>
        <dbReference type="PROSITE-ProRule" id="PRU00498"/>
    </source>
</evidence>
<evidence type="ECO:0000269" key="3">
    <source>
    </source>
</evidence>
<evidence type="ECO:0000269" key="4">
    <source>
    </source>
</evidence>
<evidence type="ECO:0000269" key="5">
    <source>
    </source>
</evidence>
<evidence type="ECO:0000303" key="6">
    <source>
    </source>
</evidence>
<evidence type="ECO:0000303" key="7">
    <source>
    </source>
</evidence>
<evidence type="ECO:0000303" key="8">
    <source>
    </source>
</evidence>
<evidence type="ECO:0000305" key="9"/>
<evidence type="ECO:0000305" key="10">
    <source>
    </source>
</evidence>
<evidence type="ECO:0000312" key="11">
    <source>
        <dbReference type="Araport" id="AT3G10320"/>
    </source>
</evidence>
<evidence type="ECO:0000312" key="12">
    <source>
        <dbReference type="EMBL" id="AHL38772.1"/>
    </source>
</evidence>
<accession>Q9SS43</accession>
<gene>
    <name evidence="7" type="primary">MUCI21</name>
    <name evidence="6" type="synonym">MUM5</name>
    <name evidence="11" type="ordered locus">At3g10320</name>
    <name evidence="12" type="ORF">F14P13.8</name>
</gene>
<reference key="1">
    <citation type="journal article" date="2014" name="Plant J.">
        <title>The plant glycosyltransferase clone collection for functional genomics.</title>
        <authorList>
            <person name="Lao J."/>
            <person name="Oikawa A."/>
            <person name="Bromley J.R."/>
            <person name="McInerney P."/>
            <person name="Suttangkakul A."/>
            <person name="Smith-Moritz A.M."/>
            <person name="Plahar H."/>
            <person name="Chiu T.-Y."/>
            <person name="Gonzalez Fernandez-Nino S.M.G."/>
            <person name="Ebert B."/>
            <person name="Yang F."/>
            <person name="Christiansen K.M."/>
            <person name="Hansen S.F."/>
            <person name="Stonebloom S."/>
            <person name="Adams P.D."/>
            <person name="Ronald P.C."/>
            <person name="Hillson N.J."/>
            <person name="Hadi M.Z."/>
            <person name="Vega-Sanchez M.E."/>
            <person name="Loque D."/>
            <person name="Scheller H.V."/>
            <person name="Heazlewood J.L."/>
        </authorList>
    </citation>
    <scope>NUCLEOTIDE SEQUENCE [MRNA]</scope>
</reference>
<reference key="2">
    <citation type="journal article" date="2000" name="Nature">
        <title>Sequence and analysis of chromosome 3 of the plant Arabidopsis thaliana.</title>
        <authorList>
            <person name="Salanoubat M."/>
            <person name="Lemcke K."/>
            <person name="Rieger M."/>
            <person name="Ansorge W."/>
            <person name="Unseld M."/>
            <person name="Fartmann B."/>
            <person name="Valle G."/>
            <person name="Bloecker H."/>
            <person name="Perez-Alonso M."/>
            <person name="Obermaier B."/>
            <person name="Delseny M."/>
            <person name="Boutry M."/>
            <person name="Grivell L.A."/>
            <person name="Mache R."/>
            <person name="Puigdomenech P."/>
            <person name="De Simone V."/>
            <person name="Choisne N."/>
            <person name="Artiguenave F."/>
            <person name="Robert C."/>
            <person name="Brottier P."/>
            <person name="Wincker P."/>
            <person name="Cattolico L."/>
            <person name="Weissenbach J."/>
            <person name="Saurin W."/>
            <person name="Quetier F."/>
            <person name="Schaefer M."/>
            <person name="Mueller-Auer S."/>
            <person name="Gabel C."/>
            <person name="Fuchs M."/>
            <person name="Benes V."/>
            <person name="Wurmbach E."/>
            <person name="Drzonek H."/>
            <person name="Erfle H."/>
            <person name="Jordan N."/>
            <person name="Bangert S."/>
            <person name="Wiedelmann R."/>
            <person name="Kranz H."/>
            <person name="Voss H."/>
            <person name="Holland R."/>
            <person name="Brandt P."/>
            <person name="Nyakatura G."/>
            <person name="Vezzi A."/>
            <person name="D'Angelo M."/>
            <person name="Pallavicini A."/>
            <person name="Toppo S."/>
            <person name="Simionati B."/>
            <person name="Conrad A."/>
            <person name="Hornischer K."/>
            <person name="Kauer G."/>
            <person name="Loehnert T.-H."/>
            <person name="Nordsiek G."/>
            <person name="Reichelt J."/>
            <person name="Scharfe M."/>
            <person name="Schoen O."/>
            <person name="Bargues M."/>
            <person name="Terol J."/>
            <person name="Climent J."/>
            <person name="Navarro P."/>
            <person name="Collado C."/>
            <person name="Perez-Perez A."/>
            <person name="Ottenwaelder B."/>
            <person name="Duchemin D."/>
            <person name="Cooke R."/>
            <person name="Laudie M."/>
            <person name="Berger-Llauro C."/>
            <person name="Purnelle B."/>
            <person name="Masuy D."/>
            <person name="de Haan M."/>
            <person name="Maarse A.C."/>
            <person name="Alcaraz J.-P."/>
            <person name="Cottet A."/>
            <person name="Casacuberta E."/>
            <person name="Monfort A."/>
            <person name="Argiriou A."/>
            <person name="Flores M."/>
            <person name="Liguori R."/>
            <person name="Vitale D."/>
            <person name="Mannhaupt G."/>
            <person name="Haase D."/>
            <person name="Schoof H."/>
            <person name="Rudd S."/>
            <person name="Zaccaria P."/>
            <person name="Mewes H.-W."/>
            <person name="Mayer K.F.X."/>
            <person name="Kaul S."/>
            <person name="Town C.D."/>
            <person name="Koo H.L."/>
            <person name="Tallon L.J."/>
            <person name="Jenkins J."/>
            <person name="Rooney T."/>
            <person name="Rizzo M."/>
            <person name="Walts A."/>
            <person name="Utterback T."/>
            <person name="Fujii C.Y."/>
            <person name="Shea T.P."/>
            <person name="Creasy T.H."/>
            <person name="Haas B."/>
            <person name="Maiti R."/>
            <person name="Wu D."/>
            <person name="Peterson J."/>
            <person name="Van Aken S."/>
            <person name="Pai G."/>
            <person name="Militscher J."/>
            <person name="Sellers P."/>
            <person name="Gill J.E."/>
            <person name="Feldblyum T.V."/>
            <person name="Preuss D."/>
            <person name="Lin X."/>
            <person name="Nierman W.C."/>
            <person name="Salzberg S.L."/>
            <person name="White O."/>
            <person name="Venter J.C."/>
            <person name="Fraser C.M."/>
            <person name="Kaneko T."/>
            <person name="Nakamura Y."/>
            <person name="Sato S."/>
            <person name="Kato T."/>
            <person name="Asamizu E."/>
            <person name="Sasamoto S."/>
            <person name="Kimura T."/>
            <person name="Idesawa K."/>
            <person name="Kawashima K."/>
            <person name="Kishida Y."/>
            <person name="Kiyokawa C."/>
            <person name="Kohara M."/>
            <person name="Matsumoto M."/>
            <person name="Matsuno A."/>
            <person name="Muraki A."/>
            <person name="Nakayama S."/>
            <person name="Nakazaki N."/>
            <person name="Shinpo S."/>
            <person name="Takeuchi C."/>
            <person name="Wada T."/>
            <person name="Watanabe A."/>
            <person name="Yamada M."/>
            <person name="Yasuda M."/>
            <person name="Tabata S."/>
        </authorList>
    </citation>
    <scope>NUCLEOTIDE SEQUENCE [LARGE SCALE GENOMIC DNA]</scope>
    <source>
        <strain>cv. Columbia</strain>
    </source>
</reference>
<reference key="3">
    <citation type="journal article" date="2017" name="Plant J.">
        <title>Araport11: a complete reannotation of the Arabidopsis thaliana reference genome.</title>
        <authorList>
            <person name="Cheng C.Y."/>
            <person name="Krishnakumar V."/>
            <person name="Chan A.P."/>
            <person name="Thibaud-Nissen F."/>
            <person name="Schobel S."/>
            <person name="Town C.D."/>
        </authorList>
    </citation>
    <scope>GENOME REANNOTATION</scope>
    <source>
        <strain>cv. Columbia</strain>
    </source>
</reference>
<reference key="4">
    <citation type="journal article" date="2003" name="Science">
        <title>Empirical analysis of transcriptional activity in the Arabidopsis genome.</title>
        <authorList>
            <person name="Yamada K."/>
            <person name="Lim J."/>
            <person name="Dale J.M."/>
            <person name="Chen H."/>
            <person name="Shinn P."/>
            <person name="Palm C.J."/>
            <person name="Southwick A.M."/>
            <person name="Wu H.C."/>
            <person name="Kim C.J."/>
            <person name="Nguyen M."/>
            <person name="Pham P.K."/>
            <person name="Cheuk R.F."/>
            <person name="Karlin-Newmann G."/>
            <person name="Liu S.X."/>
            <person name="Lam B."/>
            <person name="Sakano H."/>
            <person name="Wu T."/>
            <person name="Yu G."/>
            <person name="Miranda M."/>
            <person name="Quach H.L."/>
            <person name="Tripp M."/>
            <person name="Chang C.H."/>
            <person name="Lee J.M."/>
            <person name="Toriumi M.J."/>
            <person name="Chan M.M."/>
            <person name="Tang C.C."/>
            <person name="Onodera C.S."/>
            <person name="Deng J.M."/>
            <person name="Akiyama K."/>
            <person name="Ansari Y."/>
            <person name="Arakawa T."/>
            <person name="Banh J."/>
            <person name="Banno F."/>
            <person name="Bowser L."/>
            <person name="Brooks S.Y."/>
            <person name="Carninci P."/>
            <person name="Chao Q."/>
            <person name="Choy N."/>
            <person name="Enju A."/>
            <person name="Goldsmith A.D."/>
            <person name="Gurjal M."/>
            <person name="Hansen N.F."/>
            <person name="Hayashizaki Y."/>
            <person name="Johnson-Hopson C."/>
            <person name="Hsuan V.W."/>
            <person name="Iida K."/>
            <person name="Karnes M."/>
            <person name="Khan S."/>
            <person name="Koesema E."/>
            <person name="Ishida J."/>
            <person name="Jiang P.X."/>
            <person name="Jones T."/>
            <person name="Kawai J."/>
            <person name="Kamiya A."/>
            <person name="Meyers C."/>
            <person name="Nakajima M."/>
            <person name="Narusaka M."/>
            <person name="Seki M."/>
            <person name="Sakurai T."/>
            <person name="Satou M."/>
            <person name="Tamse R."/>
            <person name="Vaysberg M."/>
            <person name="Wallender E.K."/>
            <person name="Wong C."/>
            <person name="Yamamura Y."/>
            <person name="Yuan S."/>
            <person name="Shinozaki K."/>
            <person name="Davis R.W."/>
            <person name="Theologis A."/>
            <person name="Ecker J.R."/>
        </authorList>
    </citation>
    <scope>NUCLEOTIDE SEQUENCE [LARGE SCALE MRNA]</scope>
    <source>
        <strain>cv. Columbia</strain>
    </source>
</reference>
<reference key="5">
    <citation type="submission" date="2006-07" db="EMBL/GenBank/DDBJ databases">
        <title>Large-scale analysis of RIKEN Arabidopsis full-length (RAFL) cDNAs.</title>
        <authorList>
            <person name="Totoki Y."/>
            <person name="Seki M."/>
            <person name="Ishida J."/>
            <person name="Nakajima M."/>
            <person name="Enju A."/>
            <person name="Kamiya A."/>
            <person name="Narusaka M."/>
            <person name="Shin-i T."/>
            <person name="Nakagawa M."/>
            <person name="Sakamoto N."/>
            <person name="Oishi K."/>
            <person name="Kohara Y."/>
            <person name="Kobayashi M."/>
            <person name="Toyoda A."/>
            <person name="Sakaki Y."/>
            <person name="Sakurai T."/>
            <person name="Iida K."/>
            <person name="Akiyama K."/>
            <person name="Satou M."/>
            <person name="Toyoda T."/>
            <person name="Konagaya A."/>
            <person name="Carninci P."/>
            <person name="Kawai J."/>
            <person name="Hayashizaki Y."/>
            <person name="Shinozaki K."/>
        </authorList>
    </citation>
    <scope>NUCLEOTIDE SEQUENCE [LARGE SCALE MRNA]</scope>
    <source>
        <strain>cv. Columbia</strain>
    </source>
</reference>
<reference key="6">
    <citation type="journal article" date="2001" name="Plant Physiol.">
        <title>Isolation and characterization of mutants defective in seed coat mucilage secretory cell development in Arabidopsis.</title>
        <authorList>
            <person name="Western T.L."/>
            <person name="Burn J."/>
            <person name="Tan W.L."/>
            <person name="Skinner D.J."/>
            <person name="Martin-McCaffrey L."/>
            <person name="Moffatt B.A."/>
            <person name="Haughn G.W."/>
        </authorList>
    </citation>
    <scope>FUNCTION</scope>
    <scope>DISRUPTION PHENOTYPE</scope>
</reference>
<reference key="7">
    <citation type="journal article" date="2015" name="Plant Physiol.">
        <title>Highly branched xylan made by IRREGULAR XYLEM14 and MUCILAGE-RELATED21 links mucilage to Arabidopsis seeds.</title>
        <authorList>
            <person name="Voiniciuc C."/>
            <person name="Guenl M."/>
            <person name="Schmidt M.H."/>
            <person name="Usadel B."/>
        </authorList>
    </citation>
    <scope>FUNCTION</scope>
    <scope>CATALYTIC ACTIVITY</scope>
    <scope>SUBCELLULAR LOCATION</scope>
    <scope>DEVELOPMENTAL STAGE</scope>
    <scope>DISRUPTION PHENOTYPE</scope>
</reference>
<reference key="8">
    <citation type="journal article" date="2016" name="Plant Physiol.">
        <title>Xylans provide the structural driving force for mucilage adhesion to the Arabidopsis seed coat.</title>
        <authorList>
            <person name="Ralet M.C."/>
            <person name="Crepeau M.J."/>
            <person name="Vigouroux J."/>
            <person name="Tran J."/>
            <person name="Berger A."/>
            <person name="Salle C."/>
            <person name="Granier F."/>
            <person name="Botran L."/>
            <person name="North H.M."/>
        </authorList>
    </citation>
    <scope>FUNCTION</scope>
    <scope>DEVELOPMENTAL STAGE</scope>
    <scope>DISRUPTION PHENOTYPE</scope>
</reference>
<keyword id="KW-0961">Cell wall biogenesis/degradation</keyword>
<keyword id="KW-0325">Glycoprotein</keyword>
<keyword id="KW-0328">Glycosyltransferase</keyword>
<keyword id="KW-0333">Golgi apparatus</keyword>
<keyword id="KW-0472">Membrane</keyword>
<keyword id="KW-1185">Reference proteome</keyword>
<keyword id="KW-0735">Signal-anchor</keyword>
<keyword id="KW-0808">Transferase</keyword>
<keyword id="KW-0812">Transmembrane</keyword>
<keyword id="KW-1133">Transmembrane helix</keyword>
<sequence>MRQNLKKVAQIKVDESKKLFPYVFRVKTSCGNCAKRSKPKLIYLLIFSLISSCFVFAPQLLCFPYPSALFLIDSSIKEIENRVSESNIESPKTSQKEESISCDRTGYRSDICFMKGDIRTHSPSSSIFLYTSNDLTTDQVLQEKIKPYTRKWETSIMETIPELKLVTKDMKLFGDKRKCEVIHEVPAVLFSTGGYTGNLYHEFNDGLIPLYITSKRFNKKVVFVIAEYHKWWEMKYGDVLSQLSDYSLIDFNKDKRTHCFKEAIVGLRIHGELTVDPSQMQDDGTTINEFRNVLDRAYRPRINRLDRLEEQRFHARLAQRRKAKRPKLALFSRTGSRGITNEDLMVKMAQRIGFDIEVLRPDRTTELAKIYRVLNSSKVMVGVHGAAMTHFLFMKPGSIFIQIIPLGTDWAAETYYGEPAKKLGLDYNGYKILPRESSLYEKYDKDDPILKDPNSITKKGWQFTKGIYLNDQKVRLDLHRFKKLLIDAYAKSIR</sequence>
<dbReference type="EC" id="2.4.-.-" evidence="10"/>
<dbReference type="EMBL" id="KJ138832">
    <property type="protein sequence ID" value="AHL38772.1"/>
    <property type="molecule type" value="mRNA"/>
</dbReference>
<dbReference type="EMBL" id="AC009400">
    <property type="protein sequence ID" value="AAF02811.1"/>
    <property type="molecule type" value="Genomic_DNA"/>
</dbReference>
<dbReference type="EMBL" id="CP002686">
    <property type="protein sequence ID" value="AEE74891.1"/>
    <property type="molecule type" value="Genomic_DNA"/>
</dbReference>
<dbReference type="EMBL" id="BT005786">
    <property type="protein sequence ID" value="AAO64189.1"/>
    <property type="molecule type" value="mRNA"/>
</dbReference>
<dbReference type="EMBL" id="BT006103">
    <property type="protein sequence ID" value="AAP04088.1"/>
    <property type="molecule type" value="mRNA"/>
</dbReference>
<dbReference type="EMBL" id="AK228390">
    <property type="protein sequence ID" value="BAF00327.1"/>
    <property type="molecule type" value="mRNA"/>
</dbReference>
<dbReference type="RefSeq" id="NP_187643.1">
    <property type="nucleotide sequence ID" value="NM_111867.4"/>
</dbReference>
<dbReference type="SMR" id="Q9SS43"/>
<dbReference type="FunCoup" id="Q9SS43">
    <property type="interactions" value="450"/>
</dbReference>
<dbReference type="STRING" id="3702.Q9SS43"/>
<dbReference type="CAZy" id="GT61">
    <property type="family name" value="Glycosyltransferase Family 61"/>
</dbReference>
<dbReference type="GlyCosmos" id="Q9SS43">
    <property type="glycosylation" value="1 site, No reported glycans"/>
</dbReference>
<dbReference type="GlyGen" id="Q9SS43">
    <property type="glycosylation" value="1 site"/>
</dbReference>
<dbReference type="PaxDb" id="3702-AT3G10320.1"/>
<dbReference type="ProteomicsDB" id="191381"/>
<dbReference type="EnsemblPlants" id="AT3G10320.1">
    <property type="protein sequence ID" value="AT3G10320.1"/>
    <property type="gene ID" value="AT3G10320"/>
</dbReference>
<dbReference type="GeneID" id="820194"/>
<dbReference type="Gramene" id="AT3G10320.1">
    <property type="protein sequence ID" value="AT3G10320.1"/>
    <property type="gene ID" value="AT3G10320"/>
</dbReference>
<dbReference type="KEGG" id="ath:AT3G10320"/>
<dbReference type="Araport" id="AT3G10320"/>
<dbReference type="TAIR" id="AT3G10320">
    <property type="gene designation" value="MUCI21"/>
</dbReference>
<dbReference type="eggNOG" id="KOG4698">
    <property type="taxonomic scope" value="Eukaryota"/>
</dbReference>
<dbReference type="HOGENOM" id="CLU_016869_0_3_1"/>
<dbReference type="InParanoid" id="Q9SS43"/>
<dbReference type="OMA" id="MYYYQDY"/>
<dbReference type="PhylomeDB" id="Q9SS43"/>
<dbReference type="PRO" id="PR:Q9SS43"/>
<dbReference type="Proteomes" id="UP000006548">
    <property type="component" value="Chromosome 3"/>
</dbReference>
<dbReference type="ExpressionAtlas" id="Q9SS43">
    <property type="expression patterns" value="baseline and differential"/>
</dbReference>
<dbReference type="GO" id="GO:0005794">
    <property type="term" value="C:Golgi apparatus"/>
    <property type="evidence" value="ECO:0000314"/>
    <property type="project" value="TAIR"/>
</dbReference>
<dbReference type="GO" id="GO:0000139">
    <property type="term" value="C:Golgi membrane"/>
    <property type="evidence" value="ECO:0007669"/>
    <property type="project" value="UniProtKB-SubCell"/>
</dbReference>
<dbReference type="GO" id="GO:0047517">
    <property type="term" value="F:1,4-beta-D-xylan synthase activity"/>
    <property type="evidence" value="ECO:0000315"/>
    <property type="project" value="TAIR"/>
</dbReference>
<dbReference type="GO" id="GO:0071555">
    <property type="term" value="P:cell wall organization"/>
    <property type="evidence" value="ECO:0007669"/>
    <property type="project" value="UniProtKB-KW"/>
</dbReference>
<dbReference type="GO" id="GO:0010192">
    <property type="term" value="P:mucilage biosynthetic process"/>
    <property type="evidence" value="ECO:0000315"/>
    <property type="project" value="TAIR"/>
</dbReference>
<dbReference type="GO" id="GO:0048354">
    <property type="term" value="P:mucilage biosynthetic process involved in seed coat development"/>
    <property type="evidence" value="ECO:0000315"/>
    <property type="project" value="TAIR"/>
</dbReference>
<dbReference type="InterPro" id="IPR049625">
    <property type="entry name" value="Glyco_transf_61_cat"/>
</dbReference>
<dbReference type="InterPro" id="IPR007657">
    <property type="entry name" value="Glycosyltransferase_61"/>
</dbReference>
<dbReference type="PANTHER" id="PTHR20961">
    <property type="entry name" value="GLYCOSYLTRANSFERASE"/>
    <property type="match status" value="1"/>
</dbReference>
<dbReference type="PANTHER" id="PTHR20961:SF65">
    <property type="entry name" value="XYLAN GLYCOSYLTRANSFERASE MUCI21"/>
    <property type="match status" value="1"/>
</dbReference>
<dbReference type="Pfam" id="PF04577">
    <property type="entry name" value="Glyco_transf_61"/>
    <property type="match status" value="1"/>
</dbReference>
<proteinExistence type="evidence at protein level"/>
<comment type="function">
    <text evidence="3 4 5">Glycosyletransferase required for the proper composition and structural properties of released seed coat mucilage (PubMed:11706181, PubMed:26482889, PubMed:26979331). Required for the production of highly branched xylan polymers in seed coat mucilage (PubMed:26482889). Facilitates the addition of xylose residues directly to the xylan backbone (PubMed:26482889, PubMed:26979331). Xylan with xylose side chains seems to be necessary for pectin attachment to the seed surface (PubMed:26482889, PubMed:26979331). Essential for xylan synthesis in seed coat epidermal (SCE) cells (PubMed:26482889).</text>
</comment>
<comment type="subcellular location">
    <subcellularLocation>
        <location evidence="4">Golgi apparatus membrane</location>
        <topology evidence="1">Single-pass type II membrane protein</topology>
    </subcellularLocation>
</comment>
<comment type="developmental stage">
    <text evidence="4 5">Expressed in the seed coat at the linear cotyledon and mature green stages, when mucilage synthesis occurs.</text>
</comment>
<comment type="disruption phenotype">
    <text evidence="3 4 5">Reduced amount and altered composition of seed coat mucilage.</text>
</comment>
<comment type="similarity">
    <text evidence="9">Belongs to the glycosyltransferase 61 family.</text>
</comment>
<protein>
    <recommendedName>
        <fullName evidence="9">Xylan glycosyltransferase MUCI21</fullName>
        <ecNumber evidence="10">2.4.-.-</ecNumber>
    </recommendedName>
    <alternativeName>
        <fullName evidence="6">Protein MUCILAGE-MODIFIED 5</fullName>
    </alternativeName>
    <alternativeName>
        <fullName evidence="7">Protein MUCILAGE-RELATED 21</fullName>
    </alternativeName>
    <alternativeName>
        <fullName evidence="8">Putative xylan xylosyltransgerase MUCI21</fullName>
    </alternativeName>
</protein>
<feature type="chain" id="PRO_0000449117" description="Xylan glycosyltransferase MUCI21">
    <location>
        <begin position="1"/>
        <end position="494"/>
    </location>
</feature>
<feature type="topological domain" description="Cytoplasmic" evidence="9">
    <location>
        <begin position="1"/>
        <end position="40"/>
    </location>
</feature>
<feature type="transmembrane region" description="Helical; Signal-anchor for type II membrane protein" evidence="1">
    <location>
        <begin position="41"/>
        <end position="61"/>
    </location>
</feature>
<feature type="topological domain" description="Lumenal" evidence="9">
    <location>
        <begin position="62"/>
        <end position="494"/>
    </location>
</feature>
<feature type="glycosylation site" description="N-linked (GlcNAc...) asparagine" evidence="2">
    <location>
        <position position="375"/>
    </location>
</feature>